<protein>
    <recommendedName>
        <fullName evidence="1">Aspartate carbamoyltransferase catalytic subunit</fullName>
        <ecNumber evidence="1">2.1.3.2</ecNumber>
    </recommendedName>
    <alternativeName>
        <fullName evidence="1">Aspartate transcarbamylase</fullName>
        <shortName evidence="1">ATCase</shortName>
    </alternativeName>
</protein>
<accession>Q8D293</accession>
<sequence length="309" mass="35233">MTNFIYNKHIISINDLSKKEMNSIIDFSFSFKLKSFNTFLKNKIIAICFLEASTRTRLSFESAIYRSGGTCIGFSDSSNTSLEKKGESFIDTISIISKYVDAIIVRHPKEGAARLASEYSNNIPVINAGDGANQHPTQTILDLFSIKETQGKLDNLNIAIIGDLKYSRTVHSLSQAISKFKKNKIYFIAHSALMLPSYIINILEEKKVEYSFHDSIEEVIKKIDILYITRIQKERLDSSEYANINAKFILKKSDLFYAKKNLKILHPLPRSNELSFEVDKTSYAYYFQQAENGLFVRQAILSSILNKKL</sequence>
<proteinExistence type="inferred from homology"/>
<dbReference type="EC" id="2.1.3.2" evidence="1"/>
<dbReference type="EMBL" id="BA000021">
    <property type="protein sequence ID" value="BAC24607.1"/>
    <property type="molecule type" value="Genomic_DNA"/>
</dbReference>
<dbReference type="SMR" id="Q8D293"/>
<dbReference type="STRING" id="36870.gene:10368964"/>
<dbReference type="KEGG" id="wbr:pyrB"/>
<dbReference type="eggNOG" id="COG0540">
    <property type="taxonomic scope" value="Bacteria"/>
</dbReference>
<dbReference type="HOGENOM" id="CLU_043846_1_2_6"/>
<dbReference type="OrthoDB" id="9774690at2"/>
<dbReference type="UniPathway" id="UPA00070">
    <property type="reaction ID" value="UER00116"/>
</dbReference>
<dbReference type="Proteomes" id="UP000000562">
    <property type="component" value="Chromosome"/>
</dbReference>
<dbReference type="GO" id="GO:0005829">
    <property type="term" value="C:cytosol"/>
    <property type="evidence" value="ECO:0007669"/>
    <property type="project" value="TreeGrafter"/>
</dbReference>
<dbReference type="GO" id="GO:0016597">
    <property type="term" value="F:amino acid binding"/>
    <property type="evidence" value="ECO:0007669"/>
    <property type="project" value="InterPro"/>
</dbReference>
<dbReference type="GO" id="GO:0004070">
    <property type="term" value="F:aspartate carbamoyltransferase activity"/>
    <property type="evidence" value="ECO:0007669"/>
    <property type="project" value="UniProtKB-UniRule"/>
</dbReference>
<dbReference type="GO" id="GO:0006207">
    <property type="term" value="P:'de novo' pyrimidine nucleobase biosynthetic process"/>
    <property type="evidence" value="ECO:0007669"/>
    <property type="project" value="InterPro"/>
</dbReference>
<dbReference type="GO" id="GO:0044205">
    <property type="term" value="P:'de novo' UMP biosynthetic process"/>
    <property type="evidence" value="ECO:0007669"/>
    <property type="project" value="UniProtKB-UniRule"/>
</dbReference>
<dbReference type="GO" id="GO:0006520">
    <property type="term" value="P:amino acid metabolic process"/>
    <property type="evidence" value="ECO:0007669"/>
    <property type="project" value="InterPro"/>
</dbReference>
<dbReference type="FunFam" id="3.40.50.1370:FF:000001">
    <property type="entry name" value="Aspartate carbamoyltransferase"/>
    <property type="match status" value="1"/>
</dbReference>
<dbReference type="FunFam" id="3.40.50.1370:FF:000002">
    <property type="entry name" value="Aspartate carbamoyltransferase 2"/>
    <property type="match status" value="1"/>
</dbReference>
<dbReference type="Gene3D" id="3.40.50.1370">
    <property type="entry name" value="Aspartate/ornithine carbamoyltransferase"/>
    <property type="match status" value="2"/>
</dbReference>
<dbReference type="HAMAP" id="MF_00001">
    <property type="entry name" value="Asp_carb_tr"/>
    <property type="match status" value="1"/>
</dbReference>
<dbReference type="InterPro" id="IPR006132">
    <property type="entry name" value="Asp/Orn_carbamoyltranf_P-bd"/>
</dbReference>
<dbReference type="InterPro" id="IPR006130">
    <property type="entry name" value="Asp/Orn_carbamoylTrfase"/>
</dbReference>
<dbReference type="InterPro" id="IPR036901">
    <property type="entry name" value="Asp/Orn_carbamoylTrfase_sf"/>
</dbReference>
<dbReference type="InterPro" id="IPR002082">
    <property type="entry name" value="Asp_carbamoyltransf"/>
</dbReference>
<dbReference type="InterPro" id="IPR006131">
    <property type="entry name" value="Asp_carbamoyltransf_Asp/Orn-bd"/>
</dbReference>
<dbReference type="NCBIfam" id="TIGR00670">
    <property type="entry name" value="asp_carb_tr"/>
    <property type="match status" value="1"/>
</dbReference>
<dbReference type="NCBIfam" id="NF002032">
    <property type="entry name" value="PRK00856.1"/>
    <property type="match status" value="1"/>
</dbReference>
<dbReference type="PANTHER" id="PTHR45753:SF6">
    <property type="entry name" value="ASPARTATE CARBAMOYLTRANSFERASE"/>
    <property type="match status" value="1"/>
</dbReference>
<dbReference type="PANTHER" id="PTHR45753">
    <property type="entry name" value="ORNITHINE CARBAMOYLTRANSFERASE, MITOCHONDRIAL"/>
    <property type="match status" value="1"/>
</dbReference>
<dbReference type="Pfam" id="PF00185">
    <property type="entry name" value="OTCace"/>
    <property type="match status" value="1"/>
</dbReference>
<dbReference type="Pfam" id="PF02729">
    <property type="entry name" value="OTCace_N"/>
    <property type="match status" value="1"/>
</dbReference>
<dbReference type="PRINTS" id="PR00100">
    <property type="entry name" value="AOTCASE"/>
</dbReference>
<dbReference type="PRINTS" id="PR00101">
    <property type="entry name" value="ATCASE"/>
</dbReference>
<dbReference type="SUPFAM" id="SSF53671">
    <property type="entry name" value="Aspartate/ornithine carbamoyltransferase"/>
    <property type="match status" value="1"/>
</dbReference>
<dbReference type="PROSITE" id="PS00097">
    <property type="entry name" value="CARBAMOYLTRANSFERASE"/>
    <property type="match status" value="1"/>
</dbReference>
<evidence type="ECO:0000255" key="1">
    <source>
        <dbReference type="HAMAP-Rule" id="MF_00001"/>
    </source>
</evidence>
<organism>
    <name type="scientific">Wigglesworthia glossinidia brevipalpis</name>
    <dbReference type="NCBI Taxonomy" id="36870"/>
    <lineage>
        <taxon>Bacteria</taxon>
        <taxon>Pseudomonadati</taxon>
        <taxon>Pseudomonadota</taxon>
        <taxon>Gammaproteobacteria</taxon>
        <taxon>Enterobacterales</taxon>
        <taxon>Erwiniaceae</taxon>
        <taxon>Wigglesworthia</taxon>
    </lineage>
</organism>
<gene>
    <name evidence="1" type="primary">pyrB</name>
    <name type="ordered locus">WIGBR4610</name>
</gene>
<feature type="chain" id="PRO_0000113229" description="Aspartate carbamoyltransferase catalytic subunit">
    <location>
        <begin position="1"/>
        <end position="309"/>
    </location>
</feature>
<feature type="binding site" evidence="1">
    <location>
        <position position="55"/>
    </location>
    <ligand>
        <name>carbamoyl phosphate</name>
        <dbReference type="ChEBI" id="CHEBI:58228"/>
    </ligand>
</feature>
<feature type="binding site" evidence="1">
    <location>
        <position position="56"/>
    </location>
    <ligand>
        <name>carbamoyl phosphate</name>
        <dbReference type="ChEBI" id="CHEBI:58228"/>
    </ligand>
</feature>
<feature type="binding site" evidence="1">
    <location>
        <position position="85"/>
    </location>
    <ligand>
        <name>L-aspartate</name>
        <dbReference type="ChEBI" id="CHEBI:29991"/>
    </ligand>
</feature>
<feature type="binding site" evidence="1">
    <location>
        <position position="106"/>
    </location>
    <ligand>
        <name>carbamoyl phosphate</name>
        <dbReference type="ChEBI" id="CHEBI:58228"/>
    </ligand>
</feature>
<feature type="binding site" evidence="1">
    <location>
        <position position="135"/>
    </location>
    <ligand>
        <name>carbamoyl phosphate</name>
        <dbReference type="ChEBI" id="CHEBI:58228"/>
    </ligand>
</feature>
<feature type="binding site" evidence="1">
    <location>
        <position position="138"/>
    </location>
    <ligand>
        <name>carbamoyl phosphate</name>
        <dbReference type="ChEBI" id="CHEBI:58228"/>
    </ligand>
</feature>
<feature type="binding site" evidence="1">
    <location>
        <position position="168"/>
    </location>
    <ligand>
        <name>L-aspartate</name>
        <dbReference type="ChEBI" id="CHEBI:29991"/>
    </ligand>
</feature>
<feature type="binding site" evidence="1">
    <location>
        <position position="230"/>
    </location>
    <ligand>
        <name>L-aspartate</name>
        <dbReference type="ChEBI" id="CHEBI:29991"/>
    </ligand>
</feature>
<feature type="binding site" evidence="1">
    <location>
        <position position="268"/>
    </location>
    <ligand>
        <name>carbamoyl phosphate</name>
        <dbReference type="ChEBI" id="CHEBI:58228"/>
    </ligand>
</feature>
<feature type="binding site" evidence="1">
    <location>
        <position position="269"/>
    </location>
    <ligand>
        <name>carbamoyl phosphate</name>
        <dbReference type="ChEBI" id="CHEBI:58228"/>
    </ligand>
</feature>
<comment type="function">
    <text evidence="1">Catalyzes the condensation of carbamoyl phosphate and aspartate to form carbamoyl aspartate and inorganic phosphate, the committed step in the de novo pyrimidine nucleotide biosynthesis pathway.</text>
</comment>
<comment type="catalytic activity">
    <reaction evidence="1">
        <text>carbamoyl phosphate + L-aspartate = N-carbamoyl-L-aspartate + phosphate + H(+)</text>
        <dbReference type="Rhea" id="RHEA:20013"/>
        <dbReference type="ChEBI" id="CHEBI:15378"/>
        <dbReference type="ChEBI" id="CHEBI:29991"/>
        <dbReference type="ChEBI" id="CHEBI:32814"/>
        <dbReference type="ChEBI" id="CHEBI:43474"/>
        <dbReference type="ChEBI" id="CHEBI:58228"/>
        <dbReference type="EC" id="2.1.3.2"/>
    </reaction>
</comment>
<comment type="pathway">
    <text evidence="1">Pyrimidine metabolism; UMP biosynthesis via de novo pathway; (S)-dihydroorotate from bicarbonate: step 2/3.</text>
</comment>
<comment type="subunit">
    <text evidence="1">Heterododecamer (2C3:3R2) of six catalytic PyrB chains organized as two trimers (C3), and six regulatory PyrI chains organized as three dimers (R2).</text>
</comment>
<comment type="similarity">
    <text evidence="1">Belongs to the aspartate/ornithine carbamoyltransferase superfamily. ATCase family.</text>
</comment>
<name>PYRB_WIGBR</name>
<keyword id="KW-0665">Pyrimidine biosynthesis</keyword>
<keyword id="KW-1185">Reference proteome</keyword>
<keyword id="KW-0808">Transferase</keyword>
<reference key="1">
    <citation type="journal article" date="2002" name="Nat. Genet.">
        <title>Genome sequence of the endocellular obligate symbiont of tsetse flies, Wigglesworthia glossinidia.</title>
        <authorList>
            <person name="Akman L."/>
            <person name="Yamashita A."/>
            <person name="Watanabe H."/>
            <person name="Oshima K."/>
            <person name="Shiba T."/>
            <person name="Hattori M."/>
            <person name="Aksoy S."/>
        </authorList>
    </citation>
    <scope>NUCLEOTIDE SEQUENCE [LARGE SCALE GENOMIC DNA]</scope>
</reference>